<accession>E1BB52</accession>
<reference key="1">
    <citation type="journal article" date="2009" name="Science">
        <title>The genome sequence of taurine cattle: a window to ruminant biology and evolution.</title>
        <authorList>
            <consortium name="The bovine genome sequencing and analysis consortium"/>
        </authorList>
    </citation>
    <scope>NUCLEOTIDE SEQUENCE [LARGE SCALE GENOMIC DNA]</scope>
    <source>
        <strain>Hereford</strain>
    </source>
</reference>
<protein>
    <recommendedName>
        <fullName>Cyclin-dependent kinase 13</fullName>
        <ecNumber>2.7.11.22</ecNumber>
        <ecNumber>2.7.11.23</ecNumber>
    </recommendedName>
    <alternativeName>
        <fullName>CDC2-related protein kinase 5</fullName>
    </alternativeName>
    <alternativeName>
        <fullName>Cell division cycle 2-like protein kinase 5</fullName>
    </alternativeName>
    <alternativeName>
        <fullName>Cell division protein kinase 13</fullName>
    </alternativeName>
</protein>
<feature type="chain" id="PRO_0000406956" description="Cyclin-dependent kinase 13">
    <location>
        <begin position="1"/>
        <end position="1512"/>
    </location>
</feature>
<feature type="domain" description="Protein kinase" evidence="4">
    <location>
        <begin position="706"/>
        <end position="999"/>
    </location>
</feature>
<feature type="region of interest" description="Disordered" evidence="6">
    <location>
        <begin position="1"/>
        <end position="60"/>
    </location>
</feature>
<feature type="region of interest" description="Disordered" evidence="6">
    <location>
        <begin position="75"/>
        <end position="547"/>
    </location>
</feature>
<feature type="region of interest" description="Disordered" evidence="6">
    <location>
        <begin position="567"/>
        <end position="597"/>
    </location>
</feature>
<feature type="region of interest" description="Disordered" evidence="6">
    <location>
        <begin position="655"/>
        <end position="677"/>
    </location>
</feature>
<feature type="region of interest" description="Disordered" evidence="6">
    <location>
        <begin position="1026"/>
        <end position="1085"/>
    </location>
</feature>
<feature type="region of interest" description="Disordered" evidence="6">
    <location>
        <begin position="1139"/>
        <end position="1173"/>
    </location>
</feature>
<feature type="region of interest" description="Disordered" evidence="6">
    <location>
        <begin position="1201"/>
        <end position="1231"/>
    </location>
</feature>
<feature type="region of interest" description="Disordered" evidence="6">
    <location>
        <begin position="1245"/>
        <end position="1273"/>
    </location>
</feature>
<feature type="region of interest" description="Disordered" evidence="6">
    <location>
        <begin position="1309"/>
        <end position="1334"/>
    </location>
</feature>
<feature type="region of interest" description="Disordered" evidence="6">
    <location>
        <begin position="1353"/>
        <end position="1400"/>
    </location>
</feature>
<feature type="region of interest" description="Disordered" evidence="6">
    <location>
        <begin position="1483"/>
        <end position="1512"/>
    </location>
</feature>
<feature type="compositionally biased region" description="Pro residues" evidence="6">
    <location>
        <begin position="49"/>
        <end position="58"/>
    </location>
</feature>
<feature type="compositionally biased region" description="Basic residues" evidence="6">
    <location>
        <begin position="92"/>
        <end position="109"/>
    </location>
</feature>
<feature type="compositionally biased region" description="Gly residues" evidence="6">
    <location>
        <begin position="129"/>
        <end position="140"/>
    </location>
</feature>
<feature type="compositionally biased region" description="Low complexity" evidence="6">
    <location>
        <begin position="160"/>
        <end position="171"/>
    </location>
</feature>
<feature type="compositionally biased region" description="Basic and acidic residues" evidence="6">
    <location>
        <begin position="189"/>
        <end position="198"/>
    </location>
</feature>
<feature type="compositionally biased region" description="Basic residues" evidence="6">
    <location>
        <begin position="210"/>
        <end position="220"/>
    </location>
</feature>
<feature type="compositionally biased region" description="Low complexity" evidence="6">
    <location>
        <begin position="246"/>
        <end position="269"/>
    </location>
</feature>
<feature type="compositionally biased region" description="Basic and acidic residues" evidence="6">
    <location>
        <begin position="295"/>
        <end position="309"/>
    </location>
</feature>
<feature type="compositionally biased region" description="Low complexity" evidence="6">
    <location>
        <begin position="350"/>
        <end position="374"/>
    </location>
</feature>
<feature type="compositionally biased region" description="Low complexity" evidence="6">
    <location>
        <begin position="384"/>
        <end position="402"/>
    </location>
</feature>
<feature type="compositionally biased region" description="Basic residues" evidence="6">
    <location>
        <begin position="419"/>
        <end position="436"/>
    </location>
</feature>
<feature type="compositionally biased region" description="Low complexity" evidence="6">
    <location>
        <begin position="463"/>
        <end position="491"/>
    </location>
</feature>
<feature type="compositionally biased region" description="Polar residues" evidence="6">
    <location>
        <begin position="492"/>
        <end position="511"/>
    </location>
</feature>
<feature type="compositionally biased region" description="Basic and acidic residues" evidence="6">
    <location>
        <begin position="512"/>
        <end position="523"/>
    </location>
</feature>
<feature type="compositionally biased region" description="Basic and acidic residues" evidence="6">
    <location>
        <begin position="567"/>
        <end position="586"/>
    </location>
</feature>
<feature type="compositionally biased region" description="Basic and acidic residues" evidence="6">
    <location>
        <begin position="661"/>
        <end position="671"/>
    </location>
</feature>
<feature type="compositionally biased region" description="Basic and acidic residues" evidence="6">
    <location>
        <begin position="1044"/>
        <end position="1056"/>
    </location>
</feature>
<feature type="compositionally biased region" description="Polar residues" evidence="6">
    <location>
        <begin position="1057"/>
        <end position="1077"/>
    </location>
</feature>
<feature type="compositionally biased region" description="Polar residues" evidence="6">
    <location>
        <begin position="1145"/>
        <end position="1154"/>
    </location>
</feature>
<feature type="compositionally biased region" description="Basic and acidic residues" evidence="6">
    <location>
        <begin position="1201"/>
        <end position="1210"/>
    </location>
</feature>
<feature type="compositionally biased region" description="Pro residues" evidence="6">
    <location>
        <begin position="1254"/>
        <end position="1270"/>
    </location>
</feature>
<feature type="compositionally biased region" description="Basic and acidic residues" evidence="6">
    <location>
        <begin position="1311"/>
        <end position="1320"/>
    </location>
</feature>
<feature type="compositionally biased region" description="Polar residues" evidence="6">
    <location>
        <begin position="1369"/>
        <end position="1387"/>
    </location>
</feature>
<feature type="active site" description="Proton acceptor" evidence="4 5">
    <location>
        <position position="838"/>
    </location>
</feature>
<feature type="binding site" evidence="4">
    <location>
        <begin position="712"/>
        <end position="720"/>
    </location>
    <ligand>
        <name>ATP</name>
        <dbReference type="ChEBI" id="CHEBI:30616"/>
    </ligand>
</feature>
<feature type="binding site" evidence="4">
    <location>
        <position position="735"/>
    </location>
    <ligand>
        <name>ATP</name>
        <dbReference type="ChEBI" id="CHEBI:30616"/>
    </ligand>
</feature>
<feature type="modified residue" description="Phosphoserine" evidence="2">
    <location>
        <position position="316"/>
    </location>
</feature>
<feature type="modified residue" description="Phosphoserine" evidence="2">
    <location>
        <position position="318"/>
    </location>
</feature>
<feature type="modified residue" description="Phosphoserine" evidence="2">
    <location>
        <position position="326"/>
    </location>
</feature>
<feature type="modified residue" description="Phosphoserine" evidence="2">
    <location>
        <position position="341"/>
    </location>
</feature>
<feature type="modified residue" description="Phosphoserine" evidence="2">
    <location>
        <position position="343"/>
    </location>
</feature>
<feature type="modified residue" description="Phosphoserine" evidence="2">
    <location>
        <position position="359"/>
    </location>
</feature>
<feature type="modified residue" description="Phosphoserine" evidence="2">
    <location>
        <position position="361"/>
    </location>
</feature>
<feature type="modified residue" description="Phosphoserine" evidence="2">
    <location>
        <position position="384"/>
    </location>
</feature>
<feature type="modified residue" description="Phosphoserine" evidence="2">
    <location>
        <position position="396"/>
    </location>
</feature>
<feature type="modified residue" description="Phosphoserine" evidence="2">
    <location>
        <position position="398"/>
    </location>
</feature>
<feature type="modified residue" description="Phosphoserine" evidence="2">
    <location>
        <position position="401"/>
    </location>
</feature>
<feature type="modified residue" description="Phosphoserine" evidence="2">
    <location>
        <position position="438"/>
    </location>
</feature>
<feature type="modified residue" description="Phosphoserine" evidence="2">
    <location>
        <position position="440"/>
    </location>
</feature>
<feature type="modified residue" description="Phosphoserine" evidence="2">
    <location>
        <position position="526"/>
    </location>
</feature>
<feature type="modified residue" description="N6-acetyllysine" evidence="2">
    <location>
        <position position="557"/>
    </location>
</feature>
<feature type="modified residue" description="Phosphothreonine" evidence="2">
    <location>
        <position position="589"/>
    </location>
</feature>
<feature type="modified residue" description="Phosphothreonine" evidence="2">
    <location>
        <position position="872"/>
    </location>
</feature>
<feature type="modified residue" description="Phosphoserine" evidence="2">
    <location>
        <position position="1049"/>
    </location>
</feature>
<feature type="modified residue" description="Phosphothreonine" evidence="3">
    <location>
        <position position="1059"/>
    </location>
</feature>
<feature type="modified residue" description="Phosphothreonine" evidence="2">
    <location>
        <position position="1246"/>
    </location>
</feature>
<feature type="cross-link" description="Glycyl lysine isopeptide (Lys-Gly) (interchain with G-Cter in SUMO2)" evidence="2">
    <location>
        <position position="520"/>
    </location>
</feature>
<feature type="cross-link" description="Glycyl lysine isopeptide (Lys-Gly) (interchain with G-Cter in SUMO2)" evidence="2">
    <location>
        <position position="548"/>
    </location>
</feature>
<gene>
    <name type="primary">CDK13</name>
    <name type="synonym">CDC2L</name>
    <name type="synonym">CDC2L5</name>
</gene>
<keyword id="KW-0007">Acetylation</keyword>
<keyword id="KW-0067">ATP-binding</keyword>
<keyword id="KW-1017">Isopeptide bond</keyword>
<keyword id="KW-0418">Kinase</keyword>
<keyword id="KW-0507">mRNA processing</keyword>
<keyword id="KW-0508">mRNA splicing</keyword>
<keyword id="KW-0547">Nucleotide-binding</keyword>
<keyword id="KW-0539">Nucleus</keyword>
<keyword id="KW-0597">Phosphoprotein</keyword>
<keyword id="KW-1185">Reference proteome</keyword>
<keyword id="KW-0723">Serine/threonine-protein kinase</keyword>
<keyword id="KW-0808">Transferase</keyword>
<keyword id="KW-0832">Ubl conjugation</keyword>
<name>CDK13_BOVIN</name>
<evidence type="ECO:0000250" key="1"/>
<evidence type="ECO:0000250" key="2">
    <source>
        <dbReference type="UniProtKB" id="Q14004"/>
    </source>
</evidence>
<evidence type="ECO:0000250" key="3">
    <source>
        <dbReference type="UniProtKB" id="Q69ZA1"/>
    </source>
</evidence>
<evidence type="ECO:0000255" key="4">
    <source>
        <dbReference type="PROSITE-ProRule" id="PRU00159"/>
    </source>
</evidence>
<evidence type="ECO:0000255" key="5">
    <source>
        <dbReference type="PROSITE-ProRule" id="PRU10027"/>
    </source>
</evidence>
<evidence type="ECO:0000256" key="6">
    <source>
        <dbReference type="SAM" id="MobiDB-lite"/>
    </source>
</evidence>
<evidence type="ECO:0000305" key="7"/>
<proteinExistence type="inferred from homology"/>
<dbReference type="EC" id="2.7.11.22"/>
<dbReference type="EC" id="2.7.11.23"/>
<dbReference type="EMBL" id="AAFC03029660">
    <property type="status" value="NOT_ANNOTATED_CDS"/>
    <property type="molecule type" value="Genomic_DNA"/>
</dbReference>
<dbReference type="EMBL" id="AAFC03047979">
    <property type="status" value="NOT_ANNOTATED_CDS"/>
    <property type="molecule type" value="Genomic_DNA"/>
</dbReference>
<dbReference type="RefSeq" id="NP_001192360.1">
    <property type="nucleotide sequence ID" value="NM_001205431.1"/>
</dbReference>
<dbReference type="SMR" id="E1BB52"/>
<dbReference type="FunCoup" id="E1BB52">
    <property type="interactions" value="5160"/>
</dbReference>
<dbReference type="STRING" id="9913.ENSBTAP00000002003"/>
<dbReference type="PaxDb" id="9913-ENSBTAP00000002003"/>
<dbReference type="Ensembl" id="ENSBTAT00000002003.5">
    <property type="protein sequence ID" value="ENSBTAP00000002003.3"/>
    <property type="gene ID" value="ENSBTAG00000001528.5"/>
</dbReference>
<dbReference type="GeneID" id="511147"/>
<dbReference type="KEGG" id="bta:511147"/>
<dbReference type="CTD" id="8621"/>
<dbReference type="VEuPathDB" id="HostDB:ENSBTAG00000001528"/>
<dbReference type="VGNC" id="VGNC:27118">
    <property type="gene designation" value="CDK13"/>
</dbReference>
<dbReference type="eggNOG" id="KOG0600">
    <property type="taxonomic scope" value="Eukaryota"/>
</dbReference>
<dbReference type="GeneTree" id="ENSGT00940000157852"/>
<dbReference type="HOGENOM" id="CLU_004166_3_0_1"/>
<dbReference type="InParanoid" id="E1BB52"/>
<dbReference type="OMA" id="PKAYREE"/>
<dbReference type="OrthoDB" id="28397at2759"/>
<dbReference type="TreeFam" id="TF101060"/>
<dbReference type="Reactome" id="R-BTA-6796648">
    <property type="pathway name" value="TP53 Regulates Transcription of DNA Repair Genes"/>
</dbReference>
<dbReference type="Reactome" id="R-BTA-6798695">
    <property type="pathway name" value="Neutrophil degranulation"/>
</dbReference>
<dbReference type="Proteomes" id="UP000009136">
    <property type="component" value="Chromosome 4"/>
</dbReference>
<dbReference type="Bgee" id="ENSBTAG00000001528">
    <property type="expression patterns" value="Expressed in thymus and 109 other cell types or tissues"/>
</dbReference>
<dbReference type="GO" id="GO:0008024">
    <property type="term" value="C:cyclin/CDK positive transcription elongation factor complex"/>
    <property type="evidence" value="ECO:0000318"/>
    <property type="project" value="GO_Central"/>
</dbReference>
<dbReference type="GO" id="GO:0019908">
    <property type="term" value="C:nuclear cyclin-dependent protein kinase holoenzyme complex"/>
    <property type="evidence" value="ECO:0000250"/>
    <property type="project" value="UniProtKB"/>
</dbReference>
<dbReference type="GO" id="GO:0016607">
    <property type="term" value="C:nuclear speck"/>
    <property type="evidence" value="ECO:0000250"/>
    <property type="project" value="UniProtKB"/>
</dbReference>
<dbReference type="GO" id="GO:0005634">
    <property type="term" value="C:nucleus"/>
    <property type="evidence" value="ECO:0000318"/>
    <property type="project" value="GO_Central"/>
</dbReference>
<dbReference type="GO" id="GO:0005524">
    <property type="term" value="F:ATP binding"/>
    <property type="evidence" value="ECO:0007669"/>
    <property type="project" value="UniProtKB-KW"/>
</dbReference>
<dbReference type="GO" id="GO:0030332">
    <property type="term" value="F:cyclin binding"/>
    <property type="evidence" value="ECO:0000318"/>
    <property type="project" value="GO_Central"/>
</dbReference>
<dbReference type="GO" id="GO:0004693">
    <property type="term" value="F:cyclin-dependent protein serine/threonine kinase activity"/>
    <property type="evidence" value="ECO:0007669"/>
    <property type="project" value="UniProtKB-EC"/>
</dbReference>
<dbReference type="GO" id="GO:0106310">
    <property type="term" value="F:protein serine kinase activity"/>
    <property type="evidence" value="ECO:0007669"/>
    <property type="project" value="RHEA"/>
</dbReference>
<dbReference type="GO" id="GO:0008353">
    <property type="term" value="F:RNA polymerase II CTD heptapeptide repeat kinase activity"/>
    <property type="evidence" value="ECO:0000250"/>
    <property type="project" value="UniProtKB"/>
</dbReference>
<dbReference type="GO" id="GO:0000380">
    <property type="term" value="P:alternative mRNA splicing, via spliceosome"/>
    <property type="evidence" value="ECO:0000250"/>
    <property type="project" value="UniProtKB"/>
</dbReference>
<dbReference type="GO" id="GO:0030097">
    <property type="term" value="P:hemopoiesis"/>
    <property type="evidence" value="ECO:0000250"/>
    <property type="project" value="UniProtKB"/>
</dbReference>
<dbReference type="GO" id="GO:0045944">
    <property type="term" value="P:positive regulation of transcription by RNA polymerase II"/>
    <property type="evidence" value="ECO:0000250"/>
    <property type="project" value="UniProtKB"/>
</dbReference>
<dbReference type="GO" id="GO:0032968">
    <property type="term" value="P:positive regulation of transcription elongation by RNA polymerase II"/>
    <property type="evidence" value="ECO:0000318"/>
    <property type="project" value="GO_Central"/>
</dbReference>
<dbReference type="CDD" id="cd07864">
    <property type="entry name" value="STKc_CDK12"/>
    <property type="match status" value="1"/>
</dbReference>
<dbReference type="FunFam" id="1.10.510.10:FF:000102">
    <property type="entry name" value="cyclin-dependent kinase 12 isoform X1"/>
    <property type="match status" value="1"/>
</dbReference>
<dbReference type="FunFam" id="3.30.200.20:FF:000074">
    <property type="entry name" value="cyclin-dependent kinase 12 isoform X2"/>
    <property type="match status" value="1"/>
</dbReference>
<dbReference type="Gene3D" id="3.30.200.20">
    <property type="entry name" value="Phosphorylase Kinase, domain 1"/>
    <property type="match status" value="1"/>
</dbReference>
<dbReference type="Gene3D" id="1.10.510.10">
    <property type="entry name" value="Transferase(Phosphotransferase) domain 1"/>
    <property type="match status" value="1"/>
</dbReference>
<dbReference type="InterPro" id="IPR050108">
    <property type="entry name" value="CDK"/>
</dbReference>
<dbReference type="InterPro" id="IPR011009">
    <property type="entry name" value="Kinase-like_dom_sf"/>
</dbReference>
<dbReference type="InterPro" id="IPR000719">
    <property type="entry name" value="Prot_kinase_dom"/>
</dbReference>
<dbReference type="InterPro" id="IPR017441">
    <property type="entry name" value="Protein_kinase_ATP_BS"/>
</dbReference>
<dbReference type="InterPro" id="IPR008271">
    <property type="entry name" value="Ser/Thr_kinase_AS"/>
</dbReference>
<dbReference type="PANTHER" id="PTHR24056">
    <property type="entry name" value="CELL DIVISION PROTEIN KINASE"/>
    <property type="match status" value="1"/>
</dbReference>
<dbReference type="PANTHER" id="PTHR24056:SF459">
    <property type="entry name" value="CYCLIN-DEPENDENT KINASE 13"/>
    <property type="match status" value="1"/>
</dbReference>
<dbReference type="Pfam" id="PF00069">
    <property type="entry name" value="Pkinase"/>
    <property type="match status" value="1"/>
</dbReference>
<dbReference type="SMART" id="SM00220">
    <property type="entry name" value="S_TKc"/>
    <property type="match status" value="1"/>
</dbReference>
<dbReference type="SUPFAM" id="SSF56112">
    <property type="entry name" value="Protein kinase-like (PK-like)"/>
    <property type="match status" value="1"/>
</dbReference>
<dbReference type="PROSITE" id="PS00107">
    <property type="entry name" value="PROTEIN_KINASE_ATP"/>
    <property type="match status" value="1"/>
</dbReference>
<dbReference type="PROSITE" id="PS50011">
    <property type="entry name" value="PROTEIN_KINASE_DOM"/>
    <property type="match status" value="1"/>
</dbReference>
<dbReference type="PROSITE" id="PS00108">
    <property type="entry name" value="PROTEIN_KINASE_ST"/>
    <property type="match status" value="1"/>
</dbReference>
<sequence>MPSSSDTALGGGGGLSWAEKKLEERRKRRRFLSPQQPPLLLPLLQPQLLQPPPPPPPLLFLAAPGTAAAAAAAAAASSSCFSPGPPLEVKRLARGKRRAGGRQKRRRGPRAGQEAEKRRVFSLPQPQQDGGGGASSGGGVTPLVEYEDVSSQSEQGLLLGGASAATAATAAGGTGGSGGSPASSSGTQRRGEGSERRPRRDRRSSSGRSKDRHREHRRRDGQRGGGEASKSRSRHGHGGEERAEAGKSGSSSSSGGRRKSASATSSSSSSRKDRDPKAHRSRTKSSKEPPSAYKEPPKAYREDKTEPKAYRRRQRSLSPLGGRDDSPVSHRASQSLRNRKSPSPAGGGSSPYSRRLARSPSPYSRRRSPSYSRHSSYERGGDVSPSPYSSSSWRRSRSPYSPVIRRSAKSRSRSPYSSRHSRSRSRHRLSRSRSRHSSISPSTLTLKSSLAAELNKNKKARAAEAARAAEAAKAAEAAKAAEAAAKAAKAASTSTPTKGNTETGASASQTNHVKDVKKLKTEHAPSPSSGGTLKNDKAKTKPPLQVTKVDNNLIVDKATKKAVVVGKESKSAATKEEPVSLKEKTKPLTPSIGAKEKEQHVALVTSTLPPLPLPPMLPEDKDADSLRGNISVKAVKKEVEKKLRCLLADLPLPPELPGGDDLSKSPEEKKTATQLHNKRRPKICGPRFGEIKEKDIDWGKRCVDKFDIIGIIGEGTYGQVYKARDKDTGEMVALKKVRLDNEKEGFPITAIREIKILRQLTHQSIINMKEIVTDKEDALDFKKDKGAFYLVFEYMDHDLMGLLESGLVHFNENHIKSFMRQLMEGLDYCHKKNFLHRDIKCSNILLNNRGQIKLADFGLARLYSSEESRPYTNKVITLWYRPPELLLGEERYTPAIDVWSCGCILGELFTKKPIFQANQELAQLELISRICGSPCPAVWPDVIKLPYFNTMKPKKQYRRKLREEFVFIPAAALDLFDYMLALDPSKRCTAEQALQCEFLRDVEPSKMPPPDLPLWQDCHELWSKKRRRQKQMGMTDDVSTVKAPRKDLSLGMDDSRTSTPQSVLPSSQLKPQGNSNAAPVKTGPGQQLNHSELAILLNLLQSKTSVNMADFVQVLNIKVNSETQQQLNKINLPAGILATGEKQTDPSTPQQESSKPLGGIQPSQNMQPKVEPDAAQAAVQSAFAVLLTQLIKAQQSKQKDVLLEERENGSGHEAPLQLRPPPEPATPASGQDDLIQHQDMRLLELTPEPDRPRILPPDQRPPEPPEPPPVTEEDLDYRTENQHVPTTSSSLTDPHAGVKAALLQLLAQHQPQDDPKRESGIDYQAGDTYVPSSDYKDNFGSSSFSSAPYVSNDGLGSASAPPLERRSFMGNSDIQSLDNYSTTSSHSGGPPQPSAFSESFPSSVAGYGDIYLNTGPMLFSGDKDHRFEYSHGPIAVLANSSDPSTGPESTHPLPAKMHNYNYGGSLQETPGGHGLMHGQTWTSPAQGPGYSQGYRGHISTSAGRGRGRGLPY</sequence>
<organism>
    <name type="scientific">Bos taurus</name>
    <name type="common">Bovine</name>
    <dbReference type="NCBI Taxonomy" id="9913"/>
    <lineage>
        <taxon>Eukaryota</taxon>
        <taxon>Metazoa</taxon>
        <taxon>Chordata</taxon>
        <taxon>Craniata</taxon>
        <taxon>Vertebrata</taxon>
        <taxon>Euteleostomi</taxon>
        <taxon>Mammalia</taxon>
        <taxon>Eutheria</taxon>
        <taxon>Laurasiatheria</taxon>
        <taxon>Artiodactyla</taxon>
        <taxon>Ruminantia</taxon>
        <taxon>Pecora</taxon>
        <taxon>Bovidae</taxon>
        <taxon>Bovinae</taxon>
        <taxon>Bos</taxon>
    </lineage>
</organism>
<comment type="function">
    <text evidence="1">Cyclin-dependent kinase which displays CTD kinase activity and is required for RNA splicing. Has CTD kinase activity by hyperphosphorylating the C-terminal heptapeptide repeat domain (CTD) of the largest RNA polymerase II subunit RPB1, thereby acting as a key regulator of transcription elongation. Required for RNA splicing, probably by phosphorylating SRSF1/SF2. Required during hematopoiesis (By similarity).</text>
</comment>
<comment type="catalytic activity">
    <reaction>
        <text>[DNA-directed RNA polymerase] + ATP = phospho-[DNA-directed RNA polymerase] + ADP + H(+)</text>
        <dbReference type="Rhea" id="RHEA:10216"/>
        <dbReference type="Rhea" id="RHEA-COMP:11321"/>
        <dbReference type="Rhea" id="RHEA-COMP:11322"/>
        <dbReference type="ChEBI" id="CHEBI:15378"/>
        <dbReference type="ChEBI" id="CHEBI:30616"/>
        <dbReference type="ChEBI" id="CHEBI:43176"/>
        <dbReference type="ChEBI" id="CHEBI:68546"/>
        <dbReference type="ChEBI" id="CHEBI:456216"/>
        <dbReference type="EC" id="2.7.11.23"/>
    </reaction>
</comment>
<comment type="catalytic activity">
    <reaction>
        <text>L-seryl-[protein] + ATP = O-phospho-L-seryl-[protein] + ADP + H(+)</text>
        <dbReference type="Rhea" id="RHEA:17989"/>
        <dbReference type="Rhea" id="RHEA-COMP:9863"/>
        <dbReference type="Rhea" id="RHEA-COMP:11604"/>
        <dbReference type="ChEBI" id="CHEBI:15378"/>
        <dbReference type="ChEBI" id="CHEBI:29999"/>
        <dbReference type="ChEBI" id="CHEBI:30616"/>
        <dbReference type="ChEBI" id="CHEBI:83421"/>
        <dbReference type="ChEBI" id="CHEBI:456216"/>
        <dbReference type="EC" id="2.7.11.22"/>
    </reaction>
</comment>
<comment type="catalytic activity">
    <reaction>
        <text>L-threonyl-[protein] + ATP = O-phospho-L-threonyl-[protein] + ADP + H(+)</text>
        <dbReference type="Rhea" id="RHEA:46608"/>
        <dbReference type="Rhea" id="RHEA-COMP:11060"/>
        <dbReference type="Rhea" id="RHEA-COMP:11605"/>
        <dbReference type="ChEBI" id="CHEBI:15378"/>
        <dbReference type="ChEBI" id="CHEBI:30013"/>
        <dbReference type="ChEBI" id="CHEBI:30616"/>
        <dbReference type="ChEBI" id="CHEBI:61977"/>
        <dbReference type="ChEBI" id="CHEBI:456216"/>
        <dbReference type="EC" id="2.7.11.22"/>
    </reaction>
</comment>
<comment type="subunit">
    <text evidence="1">Interacts with CCNK, CCNL1 and CCNL2. Interacts with C1QBP.</text>
</comment>
<comment type="subcellular location">
    <subcellularLocation>
        <location evidence="1">Nucleus speckle</location>
    </subcellularLocation>
</comment>
<comment type="similarity">
    <text evidence="7">Belongs to the protein kinase superfamily. CMGC Ser/Thr protein kinase family. CDC2/CDKX subfamily.</text>
</comment>